<reference key="1">
    <citation type="journal article" date="2000" name="Nature">
        <title>Complete genome sequence of Pseudomonas aeruginosa PAO1, an opportunistic pathogen.</title>
        <authorList>
            <person name="Stover C.K."/>
            <person name="Pham X.-Q.T."/>
            <person name="Erwin A.L."/>
            <person name="Mizoguchi S.D."/>
            <person name="Warrener P."/>
            <person name="Hickey M.J."/>
            <person name="Brinkman F.S.L."/>
            <person name="Hufnagle W.O."/>
            <person name="Kowalik D.J."/>
            <person name="Lagrou M."/>
            <person name="Garber R.L."/>
            <person name="Goltry L."/>
            <person name="Tolentino E."/>
            <person name="Westbrock-Wadman S."/>
            <person name="Yuan Y."/>
            <person name="Brody L.L."/>
            <person name="Coulter S.N."/>
            <person name="Folger K.R."/>
            <person name="Kas A."/>
            <person name="Larbig K."/>
            <person name="Lim R.M."/>
            <person name="Smith K.A."/>
            <person name="Spencer D.H."/>
            <person name="Wong G.K.-S."/>
            <person name="Wu Z."/>
            <person name="Paulsen I.T."/>
            <person name="Reizer J."/>
            <person name="Saier M.H. Jr."/>
            <person name="Hancock R.E.W."/>
            <person name="Lory S."/>
            <person name="Olson M.V."/>
        </authorList>
    </citation>
    <scope>NUCLEOTIDE SEQUENCE [LARGE SCALE GENOMIC DNA]</scope>
    <source>
        <strain>ATCC 15692 / DSM 22644 / CIP 104116 / JCM 14847 / LMG 12228 / 1C / PRS 101 / PAO1</strain>
    </source>
</reference>
<accession>Q9I138</accession>
<feature type="chain" id="PRO_0000113638" description="Serine hydroxymethyltransferase 2">
    <location>
        <begin position="1"/>
        <end position="418"/>
    </location>
</feature>
<feature type="binding site" evidence="1">
    <location>
        <position position="121"/>
    </location>
    <ligand>
        <name>(6S)-5,6,7,8-tetrahydrofolate</name>
        <dbReference type="ChEBI" id="CHEBI:57453"/>
    </ligand>
</feature>
<feature type="binding site" evidence="1">
    <location>
        <begin position="125"/>
        <end position="127"/>
    </location>
    <ligand>
        <name>(6S)-5,6,7,8-tetrahydrofolate</name>
        <dbReference type="ChEBI" id="CHEBI:57453"/>
    </ligand>
</feature>
<feature type="binding site" evidence="1">
    <location>
        <begin position="355"/>
        <end position="357"/>
    </location>
    <ligand>
        <name>(6S)-5,6,7,8-tetrahydrofolate</name>
        <dbReference type="ChEBI" id="CHEBI:57453"/>
    </ligand>
</feature>
<feature type="site" description="Plays an important role in substrate specificity" evidence="1">
    <location>
        <position position="229"/>
    </location>
</feature>
<feature type="modified residue" description="N6-(pyridoxal phosphate)lysine" evidence="1">
    <location>
        <position position="230"/>
    </location>
</feature>
<proteinExistence type="inferred from homology"/>
<keyword id="KW-0028">Amino-acid biosynthesis</keyword>
<keyword id="KW-0963">Cytoplasm</keyword>
<keyword id="KW-0554">One-carbon metabolism</keyword>
<keyword id="KW-0663">Pyridoxal phosphate</keyword>
<keyword id="KW-1185">Reference proteome</keyword>
<keyword id="KW-0808">Transferase</keyword>
<organism>
    <name type="scientific">Pseudomonas aeruginosa (strain ATCC 15692 / DSM 22644 / CIP 104116 / JCM 14847 / LMG 12228 / 1C / PRS 101 / PAO1)</name>
    <dbReference type="NCBI Taxonomy" id="208964"/>
    <lineage>
        <taxon>Bacteria</taxon>
        <taxon>Pseudomonadati</taxon>
        <taxon>Pseudomonadota</taxon>
        <taxon>Gammaproteobacteria</taxon>
        <taxon>Pseudomonadales</taxon>
        <taxon>Pseudomonadaceae</taxon>
        <taxon>Pseudomonas</taxon>
    </lineage>
</organism>
<dbReference type="EC" id="2.1.2.1" evidence="1"/>
<dbReference type="EMBL" id="AE004091">
    <property type="protein sequence ID" value="AAG05832.1"/>
    <property type="molecule type" value="Genomic_DNA"/>
</dbReference>
<dbReference type="PIR" id="C83341">
    <property type="entry name" value="C83341"/>
</dbReference>
<dbReference type="RefSeq" id="NP_251134.1">
    <property type="nucleotide sequence ID" value="NC_002516.2"/>
</dbReference>
<dbReference type="SMR" id="Q9I138"/>
<dbReference type="FunCoup" id="Q9I138">
    <property type="interactions" value="740"/>
</dbReference>
<dbReference type="STRING" id="208964.PA2444"/>
<dbReference type="PaxDb" id="208964-PA2444"/>
<dbReference type="GeneID" id="882925"/>
<dbReference type="KEGG" id="pae:PA2444"/>
<dbReference type="PATRIC" id="fig|208964.12.peg.2556"/>
<dbReference type="PseudoCAP" id="PA2444"/>
<dbReference type="HOGENOM" id="CLU_022477_2_1_6"/>
<dbReference type="InParanoid" id="Q9I138"/>
<dbReference type="OrthoDB" id="9803846at2"/>
<dbReference type="PhylomeDB" id="Q9I138"/>
<dbReference type="BioCyc" id="PAER208964:G1FZ6-2481-MONOMER"/>
<dbReference type="UniPathway" id="UPA00193"/>
<dbReference type="UniPathway" id="UPA00288">
    <property type="reaction ID" value="UER01023"/>
</dbReference>
<dbReference type="Proteomes" id="UP000002438">
    <property type="component" value="Chromosome"/>
</dbReference>
<dbReference type="GO" id="GO:0005737">
    <property type="term" value="C:cytoplasm"/>
    <property type="evidence" value="ECO:0000318"/>
    <property type="project" value="GO_Central"/>
</dbReference>
<dbReference type="GO" id="GO:0005829">
    <property type="term" value="C:cytosol"/>
    <property type="evidence" value="ECO:0000318"/>
    <property type="project" value="GO_Central"/>
</dbReference>
<dbReference type="GO" id="GO:0004372">
    <property type="term" value="F:glycine hydroxymethyltransferase activity"/>
    <property type="evidence" value="ECO:0000318"/>
    <property type="project" value="GO_Central"/>
</dbReference>
<dbReference type="GO" id="GO:0030170">
    <property type="term" value="F:pyridoxal phosphate binding"/>
    <property type="evidence" value="ECO:0000318"/>
    <property type="project" value="GO_Central"/>
</dbReference>
<dbReference type="GO" id="GO:0019264">
    <property type="term" value="P:glycine biosynthetic process from serine"/>
    <property type="evidence" value="ECO:0000318"/>
    <property type="project" value="GO_Central"/>
</dbReference>
<dbReference type="GO" id="GO:0035999">
    <property type="term" value="P:tetrahydrofolate interconversion"/>
    <property type="evidence" value="ECO:0007669"/>
    <property type="project" value="UniProtKB-UniRule"/>
</dbReference>
<dbReference type="GO" id="GO:0046653">
    <property type="term" value="P:tetrahydrofolate metabolic process"/>
    <property type="evidence" value="ECO:0000318"/>
    <property type="project" value="GO_Central"/>
</dbReference>
<dbReference type="CDD" id="cd00378">
    <property type="entry name" value="SHMT"/>
    <property type="match status" value="1"/>
</dbReference>
<dbReference type="FunFam" id="3.40.640.10:FF:000001">
    <property type="entry name" value="Serine hydroxymethyltransferase"/>
    <property type="match status" value="1"/>
</dbReference>
<dbReference type="FunFam" id="3.90.1150.10:FF:000003">
    <property type="entry name" value="Serine hydroxymethyltransferase"/>
    <property type="match status" value="1"/>
</dbReference>
<dbReference type="Gene3D" id="3.90.1150.10">
    <property type="entry name" value="Aspartate Aminotransferase, domain 1"/>
    <property type="match status" value="1"/>
</dbReference>
<dbReference type="Gene3D" id="3.40.640.10">
    <property type="entry name" value="Type I PLP-dependent aspartate aminotransferase-like (Major domain)"/>
    <property type="match status" value="1"/>
</dbReference>
<dbReference type="HAMAP" id="MF_00051">
    <property type="entry name" value="SHMT"/>
    <property type="match status" value="1"/>
</dbReference>
<dbReference type="InterPro" id="IPR015424">
    <property type="entry name" value="PyrdxlP-dep_Trfase"/>
</dbReference>
<dbReference type="InterPro" id="IPR015421">
    <property type="entry name" value="PyrdxlP-dep_Trfase_major"/>
</dbReference>
<dbReference type="InterPro" id="IPR015422">
    <property type="entry name" value="PyrdxlP-dep_Trfase_small"/>
</dbReference>
<dbReference type="InterPro" id="IPR001085">
    <property type="entry name" value="Ser_HO-MeTrfase"/>
</dbReference>
<dbReference type="InterPro" id="IPR049943">
    <property type="entry name" value="Ser_HO-MeTrfase-like"/>
</dbReference>
<dbReference type="InterPro" id="IPR019798">
    <property type="entry name" value="Ser_HO-MeTrfase_PLP_BS"/>
</dbReference>
<dbReference type="InterPro" id="IPR039429">
    <property type="entry name" value="SHMT-like_dom"/>
</dbReference>
<dbReference type="NCBIfam" id="NF000586">
    <property type="entry name" value="PRK00011.1"/>
    <property type="match status" value="1"/>
</dbReference>
<dbReference type="PANTHER" id="PTHR11680">
    <property type="entry name" value="SERINE HYDROXYMETHYLTRANSFERASE"/>
    <property type="match status" value="1"/>
</dbReference>
<dbReference type="PANTHER" id="PTHR11680:SF50">
    <property type="entry name" value="SERINE HYDROXYMETHYLTRANSFERASE"/>
    <property type="match status" value="1"/>
</dbReference>
<dbReference type="Pfam" id="PF00464">
    <property type="entry name" value="SHMT"/>
    <property type="match status" value="1"/>
</dbReference>
<dbReference type="PIRSF" id="PIRSF000412">
    <property type="entry name" value="SHMT"/>
    <property type="match status" value="1"/>
</dbReference>
<dbReference type="SUPFAM" id="SSF53383">
    <property type="entry name" value="PLP-dependent transferases"/>
    <property type="match status" value="1"/>
</dbReference>
<dbReference type="PROSITE" id="PS00096">
    <property type="entry name" value="SHMT"/>
    <property type="match status" value="1"/>
</dbReference>
<protein>
    <recommendedName>
        <fullName evidence="1">Serine hydroxymethyltransferase 2</fullName>
        <shortName evidence="1">SHMT 2</shortName>
        <shortName evidence="1">Serine methylase 2</shortName>
        <ecNumber evidence="1">2.1.2.1</ecNumber>
    </recommendedName>
</protein>
<name>GLYA2_PSEAE</name>
<gene>
    <name evidence="1" type="primary">glyA2</name>
    <name type="ordered locus">PA2444</name>
</gene>
<sequence>MFSKHDQLQGYDDELLAAMDAEDRRQEDHIELIASENYASKRVMQAQGGGLTNKYAEGYPGKRYYGGCEHVDKVERLAIDRARQLFGADYANVQPHSGSSANAAVYLALLNAGDTILGMSLAHGGHLTHGAKVSSSGKLYNAVQYGLDTATGLIDYDEVERLAVEHKPKMIVAGFSAYSKTLDFPRFRAIADKVGALLFVDMAHVAGLVAAGLYPNPIPFADVVTTTTHKTLRGPRGGLILARANEEIEKKLNSAVFPGAQGGPLMHVIAAKAVCFKEALEPGFKDYQAQVIRNAKAMAEVFIGRGYDVVSGGTDNHLMLISLVKQGLTGKAADAALGAAHITVNKNAVPNDPQSPFVTSGIRIGTPAVTTRGFREGECRELAGWICDILDDIDNPEVGERVRGQVGEFCRHFPVYAD</sequence>
<evidence type="ECO:0000255" key="1">
    <source>
        <dbReference type="HAMAP-Rule" id="MF_00051"/>
    </source>
</evidence>
<comment type="function">
    <text evidence="1">Catalyzes the reversible interconversion of serine and glycine with tetrahydrofolate (THF) serving as the one-carbon carrier. This reaction serves as the major source of one-carbon groups required for the biosynthesis of purines, thymidylate, methionine, and other important biomolecules. Also exhibits THF-independent aldolase activity toward beta-hydroxyamino acids, producing glycine and aldehydes, via a retro-aldol mechanism.</text>
</comment>
<comment type="catalytic activity">
    <reaction evidence="1">
        <text>(6R)-5,10-methylene-5,6,7,8-tetrahydrofolate + glycine + H2O = (6S)-5,6,7,8-tetrahydrofolate + L-serine</text>
        <dbReference type="Rhea" id="RHEA:15481"/>
        <dbReference type="ChEBI" id="CHEBI:15377"/>
        <dbReference type="ChEBI" id="CHEBI:15636"/>
        <dbReference type="ChEBI" id="CHEBI:33384"/>
        <dbReference type="ChEBI" id="CHEBI:57305"/>
        <dbReference type="ChEBI" id="CHEBI:57453"/>
        <dbReference type="EC" id="2.1.2.1"/>
    </reaction>
</comment>
<comment type="cofactor">
    <cofactor evidence="1">
        <name>pyridoxal 5'-phosphate</name>
        <dbReference type="ChEBI" id="CHEBI:597326"/>
    </cofactor>
</comment>
<comment type="pathway">
    <text evidence="1">One-carbon metabolism; tetrahydrofolate interconversion.</text>
</comment>
<comment type="pathway">
    <text evidence="1">Amino-acid biosynthesis; glycine biosynthesis; glycine from L-serine: step 1/1.</text>
</comment>
<comment type="subunit">
    <text evidence="1">Homodimer.</text>
</comment>
<comment type="subcellular location">
    <subcellularLocation>
        <location evidence="1">Cytoplasm</location>
    </subcellularLocation>
</comment>
<comment type="similarity">
    <text evidence="1">Belongs to the SHMT family.</text>
</comment>